<feature type="chain" id="PRO_1000003346" description="2-dehydro-3-deoxyphosphooctonate aldolase">
    <location>
        <begin position="1"/>
        <end position="274"/>
    </location>
</feature>
<organism>
    <name type="scientific">Rickettsia canadensis (strain McKiel)</name>
    <dbReference type="NCBI Taxonomy" id="293613"/>
    <lineage>
        <taxon>Bacteria</taxon>
        <taxon>Pseudomonadati</taxon>
        <taxon>Pseudomonadota</taxon>
        <taxon>Alphaproteobacteria</taxon>
        <taxon>Rickettsiales</taxon>
        <taxon>Rickettsiaceae</taxon>
        <taxon>Rickettsieae</taxon>
        <taxon>Rickettsia</taxon>
        <taxon>belli group</taxon>
    </lineage>
</organism>
<reference key="1">
    <citation type="submission" date="2007-09" db="EMBL/GenBank/DDBJ databases">
        <title>Complete genome sequence of Rickettsia canadensis.</title>
        <authorList>
            <person name="Madan A."/>
            <person name="Fahey J."/>
            <person name="Helton E."/>
            <person name="Ketteman M."/>
            <person name="Madan A."/>
            <person name="Rodrigues S."/>
            <person name="Sanchez A."/>
            <person name="Whiting M."/>
            <person name="Dasch G."/>
            <person name="Eremeeva M."/>
        </authorList>
    </citation>
    <scope>NUCLEOTIDE SEQUENCE [LARGE SCALE GENOMIC DNA]</scope>
    <source>
        <strain>McKiel</strain>
    </source>
</reference>
<dbReference type="EC" id="2.5.1.55" evidence="1"/>
<dbReference type="EMBL" id="CP000409">
    <property type="protein sequence ID" value="ABV73011.1"/>
    <property type="molecule type" value="Genomic_DNA"/>
</dbReference>
<dbReference type="RefSeq" id="WP_012148212.1">
    <property type="nucleotide sequence ID" value="NC_009879.1"/>
</dbReference>
<dbReference type="SMR" id="A8EXC8"/>
<dbReference type="STRING" id="293613.A1E_00290"/>
<dbReference type="KEGG" id="rcm:A1E_00290"/>
<dbReference type="eggNOG" id="COG2877">
    <property type="taxonomic scope" value="Bacteria"/>
</dbReference>
<dbReference type="HOGENOM" id="CLU_036666_0_0_5"/>
<dbReference type="UniPathway" id="UPA00030"/>
<dbReference type="UniPathway" id="UPA00357">
    <property type="reaction ID" value="UER00474"/>
</dbReference>
<dbReference type="Proteomes" id="UP000007056">
    <property type="component" value="Chromosome"/>
</dbReference>
<dbReference type="GO" id="GO:0005737">
    <property type="term" value="C:cytoplasm"/>
    <property type="evidence" value="ECO:0007669"/>
    <property type="project" value="UniProtKB-SubCell"/>
</dbReference>
<dbReference type="GO" id="GO:0008676">
    <property type="term" value="F:3-deoxy-8-phosphooctulonate synthase activity"/>
    <property type="evidence" value="ECO:0007669"/>
    <property type="project" value="UniProtKB-UniRule"/>
</dbReference>
<dbReference type="GO" id="GO:0019294">
    <property type="term" value="P:keto-3-deoxy-D-manno-octulosonic acid biosynthetic process"/>
    <property type="evidence" value="ECO:0007669"/>
    <property type="project" value="UniProtKB-UniRule"/>
</dbReference>
<dbReference type="Gene3D" id="3.20.20.70">
    <property type="entry name" value="Aldolase class I"/>
    <property type="match status" value="1"/>
</dbReference>
<dbReference type="HAMAP" id="MF_00056">
    <property type="entry name" value="KDO8P_synth"/>
    <property type="match status" value="1"/>
</dbReference>
<dbReference type="InterPro" id="IPR013785">
    <property type="entry name" value="Aldolase_TIM"/>
</dbReference>
<dbReference type="InterPro" id="IPR006218">
    <property type="entry name" value="DAHP1/KDSA"/>
</dbReference>
<dbReference type="InterPro" id="IPR006269">
    <property type="entry name" value="KDO8P_synthase"/>
</dbReference>
<dbReference type="NCBIfam" id="TIGR01362">
    <property type="entry name" value="KDO8P_synth"/>
    <property type="match status" value="1"/>
</dbReference>
<dbReference type="NCBIfam" id="NF003543">
    <property type="entry name" value="PRK05198.1"/>
    <property type="match status" value="1"/>
</dbReference>
<dbReference type="PANTHER" id="PTHR21057">
    <property type="entry name" value="PHOSPHO-2-DEHYDRO-3-DEOXYHEPTONATE ALDOLASE"/>
    <property type="match status" value="1"/>
</dbReference>
<dbReference type="Pfam" id="PF00793">
    <property type="entry name" value="DAHP_synth_1"/>
    <property type="match status" value="1"/>
</dbReference>
<dbReference type="SUPFAM" id="SSF51569">
    <property type="entry name" value="Aldolase"/>
    <property type="match status" value="1"/>
</dbReference>
<comment type="catalytic activity">
    <reaction evidence="1">
        <text>D-arabinose 5-phosphate + phosphoenolpyruvate + H2O = 3-deoxy-alpha-D-manno-2-octulosonate-8-phosphate + phosphate</text>
        <dbReference type="Rhea" id="RHEA:14053"/>
        <dbReference type="ChEBI" id="CHEBI:15377"/>
        <dbReference type="ChEBI" id="CHEBI:43474"/>
        <dbReference type="ChEBI" id="CHEBI:57693"/>
        <dbReference type="ChEBI" id="CHEBI:58702"/>
        <dbReference type="ChEBI" id="CHEBI:85985"/>
        <dbReference type="EC" id="2.5.1.55"/>
    </reaction>
</comment>
<comment type="pathway">
    <text evidence="1">Carbohydrate biosynthesis; 3-deoxy-D-manno-octulosonate biosynthesis; 3-deoxy-D-manno-octulosonate from D-ribulose 5-phosphate: step 2/3.</text>
</comment>
<comment type="pathway">
    <text evidence="1">Bacterial outer membrane biogenesis; lipopolysaccharide biosynthesis.</text>
</comment>
<comment type="subcellular location">
    <subcellularLocation>
        <location evidence="1">Cytoplasm</location>
    </subcellularLocation>
</comment>
<comment type="similarity">
    <text evidence="1">Belongs to the KdsA family.</text>
</comment>
<proteinExistence type="inferred from homology"/>
<evidence type="ECO:0000255" key="1">
    <source>
        <dbReference type="HAMAP-Rule" id="MF_00056"/>
    </source>
</evidence>
<accession>A8EXC8</accession>
<gene>
    <name evidence="1" type="primary">kdsA</name>
    <name type="ordered locus">A1E_00290</name>
</gene>
<sequence length="274" mass="30125">MQKVVKLHNIKIGNDLPFILIAGPCQIEGQDHALFMAEKLVKLTSKLDIPFIYKSSFDKANRTSINGVRGLGIEKGLEVLSKVKAEFDCPIVTDVHSESQCTETARVVDILQIPAFLCRQTDLLQAAAKTGKIVKVKKGQFLAPWDMKNVQTKLKAFGAENILFTERGTCFGYNNLVSDMRSLAIMAKLNVPVIFDATHSVQQPGGLGDSTGGERKYVELLAKAATTVGIAGMYMEVHQDPDNAPSDGPCMIKLDNLESILIKLKKYDKITKEK</sequence>
<keyword id="KW-0963">Cytoplasm</keyword>
<keyword id="KW-0448">Lipopolysaccharide biosynthesis</keyword>
<keyword id="KW-0808">Transferase</keyword>
<name>KDSA_RICCK</name>
<protein>
    <recommendedName>
        <fullName evidence="1">2-dehydro-3-deoxyphosphooctonate aldolase</fullName>
        <ecNumber evidence="1">2.5.1.55</ecNumber>
    </recommendedName>
    <alternativeName>
        <fullName evidence="1">3-deoxy-D-manno-octulosonic acid 8-phosphate synthase</fullName>
    </alternativeName>
    <alternativeName>
        <fullName evidence="1">KDO-8-phosphate synthase</fullName>
        <shortName evidence="1">KDO 8-P synthase</shortName>
        <shortName evidence="1">KDOPS</shortName>
    </alternativeName>
    <alternativeName>
        <fullName evidence="1">Phospho-2-dehydro-3-deoxyoctonate aldolase</fullName>
    </alternativeName>
</protein>